<sequence length="560" mass="63221">MLGLLGATTLMLVAGAPWVLPAGGADLRSPENVVVSIIDDNFILKWKSSSESVSNVTFSADYQITGMDNWIKLPGCQYVTSTECNFSSIKLKSVYEKTKLRIRAETGNSTSPWYEVEPFIPFQEAQIGPPDVHLEAEDKAIIINLSPPGTKNSVMWAMDSSSFVYSLVIWKNSSSLEERTKTVYARDKIHQLSPETTYCLKVKAGLRSPRKVGVYSPVYCINTTVKHHLPSPENLEINAENRVYVLKWNYTYENVTFQAQWLHAFLKKIPEDHSDKWKQIPNCENVKTTHCVFPQNVFTKGIFFIRVQASNGNSTSLWSEEKRFNTEMQTILFPPVINMKPINDASLRVGIGAPKESEDKSVNQLYPLIYEVIFRENTSDTERDVLEKRTDFTFSNLKPLTVYCVKARALIENDRWNRSSVFSDTVCEKTKPGSTSQAWLIAGILSAILLFPAVFYGVKVVSRCINYVFFPSSKPPSTIDEYFAEQPLKNLLLSTSEEQTEICFIVENTNTITTIEETDQIDDNHSRCSSQTNRDSGVYSNEDENSGSKIGEEILRQAAV</sequence>
<keyword id="KW-1003">Cell membrane</keyword>
<keyword id="KW-1015">Disulfide bond</keyword>
<keyword id="KW-0967">Endosome</keyword>
<keyword id="KW-0325">Glycoprotein</keyword>
<keyword id="KW-0449">Lipoprotein</keyword>
<keyword id="KW-0458">Lysosome</keyword>
<keyword id="KW-0472">Membrane</keyword>
<keyword id="KW-0564">Palmitate</keyword>
<keyword id="KW-0597">Phosphoprotein</keyword>
<keyword id="KW-0675">Receptor</keyword>
<keyword id="KW-1185">Reference proteome</keyword>
<keyword id="KW-0677">Repeat</keyword>
<keyword id="KW-0732">Signal</keyword>
<keyword id="KW-0812">Transmembrane</keyword>
<keyword id="KW-1133">Transmembrane helix</keyword>
<keyword id="KW-0832">Ubl conjugation</keyword>
<dbReference type="EMBL" id="AB116561">
    <property type="protein sequence ID" value="BAD06315.1"/>
    <property type="molecule type" value="mRNA"/>
</dbReference>
<dbReference type="RefSeq" id="NP_998937.1">
    <property type="nucleotide sequence ID" value="NM_213772.1"/>
</dbReference>
<dbReference type="SMR" id="Q764M8"/>
<dbReference type="FunCoup" id="Q764M8">
    <property type="interactions" value="973"/>
</dbReference>
<dbReference type="STRING" id="9823.ENSSSCP00000067427"/>
<dbReference type="GlyCosmos" id="Q764M8">
    <property type="glycosylation" value="10 sites, No reported glycans"/>
</dbReference>
<dbReference type="GlyGen" id="Q764M8">
    <property type="glycosylation" value="10 sites"/>
</dbReference>
<dbReference type="GeneID" id="396658"/>
<dbReference type="KEGG" id="ssc:396658"/>
<dbReference type="CTD" id="3454"/>
<dbReference type="InParanoid" id="Q764M8"/>
<dbReference type="OrthoDB" id="9944680at2759"/>
<dbReference type="Proteomes" id="UP000008227">
    <property type="component" value="Unplaced"/>
</dbReference>
<dbReference type="Proteomes" id="UP000314985">
    <property type="component" value="Unplaced"/>
</dbReference>
<dbReference type="Proteomes" id="UP000694570">
    <property type="component" value="Unplaced"/>
</dbReference>
<dbReference type="Proteomes" id="UP000694571">
    <property type="component" value="Unplaced"/>
</dbReference>
<dbReference type="Proteomes" id="UP000694720">
    <property type="component" value="Unplaced"/>
</dbReference>
<dbReference type="Proteomes" id="UP000694722">
    <property type="component" value="Unplaced"/>
</dbReference>
<dbReference type="Proteomes" id="UP000694723">
    <property type="component" value="Unplaced"/>
</dbReference>
<dbReference type="Proteomes" id="UP000694724">
    <property type="component" value="Unplaced"/>
</dbReference>
<dbReference type="Proteomes" id="UP000694725">
    <property type="component" value="Unplaced"/>
</dbReference>
<dbReference type="Proteomes" id="UP000694726">
    <property type="component" value="Unplaced"/>
</dbReference>
<dbReference type="Proteomes" id="UP000694727">
    <property type="component" value="Unplaced"/>
</dbReference>
<dbReference type="Proteomes" id="UP000694728">
    <property type="component" value="Unplaced"/>
</dbReference>
<dbReference type="GO" id="GO:0005770">
    <property type="term" value="C:late endosome"/>
    <property type="evidence" value="ECO:0007669"/>
    <property type="project" value="UniProtKB-SubCell"/>
</dbReference>
<dbReference type="GO" id="GO:0005764">
    <property type="term" value="C:lysosome"/>
    <property type="evidence" value="ECO:0007669"/>
    <property type="project" value="UniProtKB-SubCell"/>
</dbReference>
<dbReference type="GO" id="GO:0005886">
    <property type="term" value="C:plasma membrane"/>
    <property type="evidence" value="ECO:0000250"/>
    <property type="project" value="UniProtKB"/>
</dbReference>
<dbReference type="GO" id="GO:0019962">
    <property type="term" value="F:type I interferon binding"/>
    <property type="evidence" value="ECO:0000250"/>
    <property type="project" value="UniProtKB"/>
</dbReference>
<dbReference type="GO" id="GO:0004905">
    <property type="term" value="F:type I interferon receptor activity"/>
    <property type="evidence" value="ECO:0000250"/>
    <property type="project" value="UniProtKB"/>
</dbReference>
<dbReference type="GO" id="GO:0035457">
    <property type="term" value="P:cellular response to interferon-alpha"/>
    <property type="evidence" value="ECO:0000250"/>
    <property type="project" value="UniProtKB"/>
</dbReference>
<dbReference type="GO" id="GO:0032496">
    <property type="term" value="P:response to lipopolysaccharide"/>
    <property type="evidence" value="ECO:0000250"/>
    <property type="project" value="UniProtKB"/>
</dbReference>
<dbReference type="GO" id="GO:0060337">
    <property type="term" value="P:type I interferon-mediated signaling pathway"/>
    <property type="evidence" value="ECO:0000250"/>
    <property type="project" value="UniProtKB"/>
</dbReference>
<dbReference type="CDD" id="cd00063">
    <property type="entry name" value="FN3"/>
    <property type="match status" value="1"/>
</dbReference>
<dbReference type="FunFam" id="2.60.40.10:FF:000842">
    <property type="entry name" value="Interferon receptor 1 isoform 4"/>
    <property type="match status" value="2"/>
</dbReference>
<dbReference type="FunFam" id="2.60.40.10:FF:001548">
    <property type="entry name" value="Interferon receptor 1 isoform 4"/>
    <property type="match status" value="1"/>
</dbReference>
<dbReference type="FunFam" id="2.60.40.10:FF:001563">
    <property type="entry name" value="Interferon receptor 1 isoform 4"/>
    <property type="match status" value="1"/>
</dbReference>
<dbReference type="Gene3D" id="2.60.40.10">
    <property type="entry name" value="Immunoglobulins"/>
    <property type="match status" value="4"/>
</dbReference>
<dbReference type="InterPro" id="IPR003961">
    <property type="entry name" value="FN3_dom"/>
</dbReference>
<dbReference type="InterPro" id="IPR036116">
    <property type="entry name" value="FN3_sf"/>
</dbReference>
<dbReference type="InterPro" id="IPR013783">
    <property type="entry name" value="Ig-like_fold"/>
</dbReference>
<dbReference type="InterPro" id="IPR015373">
    <property type="entry name" value="Interferon/interleukin_rcp_dom"/>
</dbReference>
<dbReference type="InterPro" id="IPR016669">
    <property type="entry name" value="Interferon_alpha/beta_rcpt-1"/>
</dbReference>
<dbReference type="InterPro" id="IPR050650">
    <property type="entry name" value="Type-II_Cytokine-TF_Rcpt"/>
</dbReference>
<dbReference type="PANTHER" id="PTHR20859:SF54">
    <property type="entry name" value="INTERFERON ALPHA_BETA RECEPTOR 1"/>
    <property type="match status" value="1"/>
</dbReference>
<dbReference type="PANTHER" id="PTHR20859">
    <property type="entry name" value="INTERFERON/INTERLEUKIN RECEPTOR"/>
    <property type="match status" value="1"/>
</dbReference>
<dbReference type="Pfam" id="PF09294">
    <property type="entry name" value="Interfer-bind"/>
    <property type="match status" value="2"/>
</dbReference>
<dbReference type="Pfam" id="PF01108">
    <property type="entry name" value="Tissue_fac"/>
    <property type="match status" value="1"/>
</dbReference>
<dbReference type="PIRSF" id="PIRSF016567">
    <property type="entry name" value="IFN_alpha/beta_recept-1"/>
    <property type="match status" value="1"/>
</dbReference>
<dbReference type="SUPFAM" id="SSF49265">
    <property type="entry name" value="Fibronectin type III"/>
    <property type="match status" value="4"/>
</dbReference>
<dbReference type="PROSITE" id="PS50853">
    <property type="entry name" value="FN3"/>
    <property type="match status" value="3"/>
</dbReference>
<protein>
    <recommendedName>
        <fullName>Interferon alpha/beta receptor 1</fullName>
        <shortName>IFN-R-1</shortName>
        <shortName>IFN-alpha/beta receptor 1</shortName>
    </recommendedName>
    <alternativeName>
        <fullName>Type I interferon receptor 1</fullName>
    </alternativeName>
</protein>
<organism>
    <name type="scientific">Sus scrofa</name>
    <name type="common">Pig</name>
    <dbReference type="NCBI Taxonomy" id="9823"/>
    <lineage>
        <taxon>Eukaryota</taxon>
        <taxon>Metazoa</taxon>
        <taxon>Chordata</taxon>
        <taxon>Craniata</taxon>
        <taxon>Vertebrata</taxon>
        <taxon>Euteleostomi</taxon>
        <taxon>Mammalia</taxon>
        <taxon>Eutheria</taxon>
        <taxon>Laurasiatheria</taxon>
        <taxon>Artiodactyla</taxon>
        <taxon>Suina</taxon>
        <taxon>Suidae</taxon>
        <taxon>Sus</taxon>
    </lineage>
</organism>
<reference key="1">
    <citation type="journal article" date="2004" name="Nucleic Acids Res.">
        <title>PEDE (Pig EST Data Explorer): construction of a database for ESTs derived from porcine full-length cDNA libraries.</title>
        <authorList>
            <person name="Uenishi H."/>
            <person name="Eguchi T."/>
            <person name="Suzuki K."/>
            <person name="Sawazaki T."/>
            <person name="Toki D."/>
            <person name="Shinkai H."/>
            <person name="Okumura N."/>
            <person name="Hamasima N."/>
            <person name="Awata T."/>
        </authorList>
    </citation>
    <scope>NUCLEOTIDE SEQUENCE [LARGE SCALE MRNA]</scope>
</reference>
<accession>Q764M8</accession>
<feature type="signal peptide" evidence="3">
    <location>
        <begin position="1"/>
        <end position="24"/>
    </location>
</feature>
<feature type="chain" id="PRO_0000011003" description="Interferon alpha/beta receptor 1">
    <location>
        <begin position="25"/>
        <end position="560"/>
    </location>
</feature>
<feature type="topological domain" description="Extracellular" evidence="3">
    <location>
        <begin position="25"/>
        <end position="437"/>
    </location>
</feature>
<feature type="transmembrane region" description="Helical" evidence="3">
    <location>
        <begin position="438"/>
        <end position="458"/>
    </location>
</feature>
<feature type="topological domain" description="Cytoplasmic" evidence="3">
    <location>
        <begin position="459"/>
        <end position="560"/>
    </location>
</feature>
<feature type="domain" description="Fibronectin type-III 1" evidence="4">
    <location>
        <begin position="29"/>
        <end position="125"/>
    </location>
</feature>
<feature type="domain" description="Fibronectin type-III 2" evidence="4">
    <location>
        <begin position="133"/>
        <end position="224"/>
    </location>
</feature>
<feature type="domain" description="Fibronectin type-III 3" evidence="4">
    <location>
        <begin position="231"/>
        <end position="329"/>
    </location>
</feature>
<feature type="domain" description="Fibronectin type-III 4" evidence="4">
    <location>
        <begin position="333"/>
        <end position="433"/>
    </location>
</feature>
<feature type="region of interest" description="Important for interaction with TYK2" evidence="1">
    <location>
        <begin position="492"/>
        <end position="501"/>
    </location>
</feature>
<feature type="region of interest" description="Disordered" evidence="5">
    <location>
        <begin position="520"/>
        <end position="560"/>
    </location>
</feature>
<feature type="compositionally biased region" description="Polar residues" evidence="5">
    <location>
        <begin position="527"/>
        <end position="539"/>
    </location>
</feature>
<feature type="compositionally biased region" description="Basic and acidic residues" evidence="5">
    <location>
        <begin position="550"/>
        <end position="560"/>
    </location>
</feature>
<feature type="modified residue" description="Phosphotyrosine; by TYK2" evidence="1">
    <location>
        <position position="467"/>
    </location>
</feature>
<feature type="modified residue" description="Phosphotyrosine; by TYK2" evidence="1">
    <location>
        <position position="482"/>
    </location>
</feature>
<feature type="modified residue" description="Phosphoserine" evidence="1">
    <location>
        <position position="496"/>
    </location>
</feature>
<feature type="modified residue" description="Phosphoserine" evidence="1">
    <location>
        <position position="536"/>
    </location>
</feature>
<feature type="lipid moiety-binding region" description="S-palmitoyl cysteine" evidence="1">
    <location>
        <position position="464"/>
    </location>
</feature>
<feature type="glycosylation site" description="N-linked (GlcNAc...) asparagine" evidence="3">
    <location>
        <position position="55"/>
    </location>
</feature>
<feature type="glycosylation site" description="N-linked (GlcNAc...) asparagine" evidence="3">
    <location>
        <position position="85"/>
    </location>
</feature>
<feature type="glycosylation site" description="N-linked (GlcNAc...) asparagine" evidence="3">
    <location>
        <position position="108"/>
    </location>
</feature>
<feature type="glycosylation site" description="N-linked (GlcNAc...) asparagine" evidence="3">
    <location>
        <position position="172"/>
    </location>
</feature>
<feature type="glycosylation site" description="N-linked (GlcNAc...) asparagine" evidence="3">
    <location>
        <position position="222"/>
    </location>
</feature>
<feature type="glycosylation site" description="N-linked (GlcNAc...) asparagine" evidence="3">
    <location>
        <position position="249"/>
    </location>
</feature>
<feature type="glycosylation site" description="N-linked (GlcNAc...) asparagine" evidence="3">
    <location>
        <position position="254"/>
    </location>
</feature>
<feature type="glycosylation site" description="N-linked (GlcNAc...) asparagine" evidence="3">
    <location>
        <position position="313"/>
    </location>
</feature>
<feature type="glycosylation site" description="N-linked (GlcNAc...) asparagine" evidence="3">
    <location>
        <position position="377"/>
    </location>
</feature>
<feature type="glycosylation site" description="N-linked (GlcNAc...) asparagine" evidence="3">
    <location>
        <position position="417"/>
    </location>
</feature>
<feature type="disulfide bond" evidence="1">
    <location>
        <begin position="76"/>
        <end position="84"/>
    </location>
</feature>
<feature type="disulfide bond" evidence="1">
    <location>
        <begin position="199"/>
        <end position="220"/>
    </location>
</feature>
<feature type="disulfide bond" evidence="1">
    <location>
        <begin position="283"/>
        <end position="291"/>
    </location>
</feature>
<feature type="disulfide bond" evidence="2">
    <location>
        <begin position="404"/>
        <end position="427"/>
    </location>
</feature>
<comment type="function">
    <text evidence="1 2">Together with IFNAR2, forms the heterodimeric receptor for type I interferons (including interferons alpha, beta, epsilon, omega and kappa). Type I interferon binding activates the JAK-STAT signaling cascade, resulting in transcriptional activation or repression of interferon-regulated genes that encode the effectors of the interferon response. Mechanistically, type I interferon-binding brings the IFNAR1 and IFNAR2 subunits into close proximity with one another, driving their associated Janus kinases (JAKs) (TYK2 bound to IFNAR1 and JAK1 bound to IFNAR2) to cross-phosphorylate one another. The activated kinases phosphorylate specific tyrosine residues on the intracellular domains of IFNAR1 and IFNAR2, forming docking sites for the STAT transcription factors. STAT proteins are then phosphorylated by the JAKs, promoting their translocation into the nucleus to regulate expression of interferon-regulated genes (By similarity). Can also act independently of IFNAR2: form an active IFNB1 receptor by itself and activate a signaling cascade that does not involve activation of the JAK-STAT pathway (By similarity).</text>
</comment>
<comment type="subunit">
    <text evidence="1">Heterodimer with IFNAR2; forming the receptor for type I interferon. Interacts with TYK2. Interacts with STAT1 and STAT2; the interaction requires its phosphorylation at Tyr-482. Interacts (serine-phosphorylated form) with FBXW11, the substrate recognition component of a SCF (SKP1-CUL1-F-box protein) E3 ubiquitin-protein ligase complex. Interacts with SHMT2; this promotes interaction with ABRAXAS2 and the BRISC complex. Interacts with TRIM10; this interaction prevents association between IFNAR1 and TYK2.</text>
</comment>
<comment type="subcellular location">
    <subcellularLocation>
        <location evidence="1">Cell membrane</location>
        <topology evidence="1">Single-pass type I membrane protein</topology>
    </subcellularLocation>
    <subcellularLocation>
        <location evidence="1">Late endosome</location>
    </subcellularLocation>
    <subcellularLocation>
        <location evidence="1">Lysosome</location>
    </subcellularLocation>
    <text evidence="1">Interferon binding triggers internalization of the receptor from the cell membrane into endosomes and then into lysosomes.</text>
</comment>
<comment type="PTM">
    <text evidence="1">Ubiquitinated, leading to its internalization and degradation. Polyubiquitinated via 'Lys-48'-linked and 'Lys-63'-linked ubiquitin chains, leading to receptor internalization and lysosomal degradation. The 'Lys-63'-linked ubiquitin chains are cleaved off by the BRISC complex.</text>
</comment>
<comment type="PTM">
    <text evidence="1">Phosphorylated on tyrosine residues in response to interferon-binding: phosphorylation by TYK2 tyrosine kinase creates docking sites for STAT proteins. Phosphorylated on serine residues in response to interferon binding; this promotes interaction with FBXW11 and ubiquitination.</text>
</comment>
<comment type="PTM">
    <text evidence="1">Palmitoylation at Cys-464 is required for the activation of STAT1 and STAT2.</text>
</comment>
<comment type="similarity">
    <text evidence="6">Belongs to the type II cytokine receptor family.</text>
</comment>
<gene>
    <name type="primary">IFNAR1</name>
</gene>
<evidence type="ECO:0000250" key="1">
    <source>
        <dbReference type="UniProtKB" id="P17181"/>
    </source>
</evidence>
<evidence type="ECO:0000250" key="2">
    <source>
        <dbReference type="UniProtKB" id="P33896"/>
    </source>
</evidence>
<evidence type="ECO:0000255" key="3"/>
<evidence type="ECO:0000255" key="4">
    <source>
        <dbReference type="PROSITE-ProRule" id="PRU00316"/>
    </source>
</evidence>
<evidence type="ECO:0000256" key="5">
    <source>
        <dbReference type="SAM" id="MobiDB-lite"/>
    </source>
</evidence>
<evidence type="ECO:0000305" key="6"/>
<name>INAR1_PIG</name>
<proteinExistence type="evidence at transcript level"/>